<gene>
    <name type="primary">RAS</name>
</gene>
<organism>
    <name type="scientific">Plectranthus scutellarioides</name>
    <name type="common">Coleus</name>
    <name type="synonym">Solenostemon scutellarioides</name>
    <dbReference type="NCBI Taxonomy" id="4142"/>
    <lineage>
        <taxon>Eukaryota</taxon>
        <taxon>Viridiplantae</taxon>
        <taxon>Streptophyta</taxon>
        <taxon>Embryophyta</taxon>
        <taxon>Tracheophyta</taxon>
        <taxon>Spermatophyta</taxon>
        <taxon>Magnoliopsida</taxon>
        <taxon>eudicotyledons</taxon>
        <taxon>Gunneridae</taxon>
        <taxon>Pentapetalae</taxon>
        <taxon>asterids</taxon>
        <taxon>lamiids</taxon>
        <taxon>Lamiales</taxon>
        <taxon>Lamiaceae</taxon>
        <taxon>Nepetoideae</taxon>
        <taxon>Ocimeae</taxon>
        <taxon>Plectranthinae</taxon>
        <taxon>Coleus</taxon>
    </lineage>
</organism>
<feature type="chain" id="PRO_0000422582" description="Rosmarinate synthase">
    <location>
        <begin position="1"/>
        <end position="430"/>
    </location>
</feature>
<feature type="region of interest" description="Disordered" evidence="2">
    <location>
        <begin position="178"/>
        <end position="210"/>
    </location>
</feature>
<feature type="active site" description="Proton acceptor" evidence="1">
    <location>
        <position position="152"/>
    </location>
</feature>
<feature type="active site" description="Proton acceptor" evidence="1">
    <location>
        <position position="377"/>
    </location>
</feature>
<feature type="sequence conflict" description="In Ref. 1; AA sequence." evidence="5" ref="1">
    <original>YA</original>
    <variation>SF</variation>
    <location>
        <begin position="71"/>
        <end position="72"/>
    </location>
</feature>
<feature type="strand" evidence="6">
    <location>
        <begin position="3"/>
        <end position="10"/>
    </location>
</feature>
<feature type="turn" evidence="6">
    <location>
        <begin position="26"/>
        <end position="29"/>
    </location>
</feature>
<feature type="strand" evidence="6">
    <location>
        <begin position="36"/>
        <end position="43"/>
    </location>
</feature>
<feature type="strand" evidence="6">
    <location>
        <begin position="47"/>
        <end position="50"/>
    </location>
</feature>
<feature type="helix" evidence="6">
    <location>
        <begin position="54"/>
        <end position="65"/>
    </location>
</feature>
<feature type="helix" evidence="6">
    <location>
        <begin position="69"/>
        <end position="71"/>
    </location>
</feature>
<feature type="strand" evidence="6">
    <location>
        <begin position="92"/>
        <end position="98"/>
    </location>
</feature>
<feature type="helix" evidence="6">
    <location>
        <begin position="102"/>
        <end position="104"/>
    </location>
</feature>
<feature type="turn" evidence="6">
    <location>
        <begin position="105"/>
        <end position="107"/>
    </location>
</feature>
<feature type="helix" evidence="6">
    <location>
        <begin position="114"/>
        <end position="116"/>
    </location>
</feature>
<feature type="turn" evidence="6">
    <location>
        <begin position="126"/>
        <end position="128"/>
    </location>
</feature>
<feature type="strand" evidence="6">
    <location>
        <begin position="131"/>
        <end position="138"/>
    </location>
</feature>
<feature type="strand" evidence="6">
    <location>
        <begin position="140"/>
        <end position="142"/>
    </location>
</feature>
<feature type="strand" evidence="6">
    <location>
        <begin position="144"/>
        <end position="151"/>
    </location>
</feature>
<feature type="turn" evidence="6">
    <location>
        <begin position="152"/>
        <end position="154"/>
    </location>
</feature>
<feature type="helix" evidence="6">
    <location>
        <begin position="157"/>
        <end position="169"/>
    </location>
</feature>
<feature type="turn" evidence="6">
    <location>
        <begin position="170"/>
        <end position="173"/>
    </location>
</feature>
<feature type="helix" evidence="6">
    <location>
        <begin position="185"/>
        <end position="188"/>
    </location>
</feature>
<feature type="turn" evidence="6">
    <location>
        <begin position="201"/>
        <end position="203"/>
    </location>
</feature>
<feature type="strand" evidence="6">
    <location>
        <begin position="218"/>
        <end position="224"/>
    </location>
</feature>
<feature type="helix" evidence="6">
    <location>
        <begin position="252"/>
        <end position="268"/>
    </location>
</feature>
<feature type="strand" evidence="6">
    <location>
        <begin position="275"/>
        <end position="283"/>
    </location>
</feature>
<feature type="turn" evidence="6">
    <location>
        <begin position="284"/>
        <end position="289"/>
    </location>
</feature>
<feature type="strand" evidence="6">
    <location>
        <begin position="299"/>
        <end position="302"/>
    </location>
</feature>
<feature type="strand" evidence="6">
    <location>
        <begin position="305"/>
        <end position="307"/>
    </location>
</feature>
<feature type="helix" evidence="6">
    <location>
        <begin position="308"/>
        <end position="312"/>
    </location>
</feature>
<feature type="helix" evidence="6">
    <location>
        <begin position="316"/>
        <end position="328"/>
    </location>
</feature>
<feature type="helix" evidence="6">
    <location>
        <begin position="332"/>
        <end position="344"/>
    </location>
</feature>
<feature type="strand" evidence="6">
    <location>
        <begin position="355"/>
        <end position="359"/>
    </location>
</feature>
<feature type="strand" evidence="6">
    <location>
        <begin position="363"/>
        <end position="365"/>
    </location>
</feature>
<feature type="strand" evidence="6">
    <location>
        <begin position="369"/>
        <end position="371"/>
    </location>
</feature>
<feature type="strand" evidence="6">
    <location>
        <begin position="384"/>
        <end position="388"/>
    </location>
</feature>
<feature type="strand" evidence="6">
    <location>
        <begin position="396"/>
        <end position="401"/>
    </location>
</feature>
<feature type="strand" evidence="6">
    <location>
        <begin position="409"/>
        <end position="416"/>
    </location>
</feature>
<feature type="helix" evidence="6">
    <location>
        <begin position="417"/>
        <end position="420"/>
    </location>
</feature>
<feature type="helix" evidence="6">
    <location>
        <begin position="422"/>
        <end position="427"/>
    </location>
</feature>
<proteinExistence type="evidence at protein level"/>
<dbReference type="EC" id="2.3.1.140"/>
<dbReference type="EMBL" id="AM283092">
    <property type="protein sequence ID" value="CAK55166.1"/>
    <property type="molecule type" value="mRNA"/>
</dbReference>
<dbReference type="PDB" id="6MK2">
    <property type="method" value="X-ray"/>
    <property type="resolution" value="3.35 A"/>
    <property type="chains" value="A=1-430"/>
</dbReference>
<dbReference type="PDBsum" id="6MK2"/>
<dbReference type="SMR" id="A0PDV5"/>
<dbReference type="BRENDA" id="2.3.1.140">
    <property type="organism ID" value="1561"/>
</dbReference>
<dbReference type="GO" id="GO:0050266">
    <property type="term" value="F:rosmarinate synthase activity"/>
    <property type="evidence" value="ECO:0000314"/>
    <property type="project" value="UniProtKB"/>
</dbReference>
<dbReference type="FunFam" id="3.30.559.10:FF:000015">
    <property type="entry name" value="Spermidine hydroxycinnamoyl transferase"/>
    <property type="match status" value="1"/>
</dbReference>
<dbReference type="FunFam" id="3.30.559.10:FF:000008">
    <property type="entry name" value="Tryptamine hydroxycinnamoyl transferase"/>
    <property type="match status" value="1"/>
</dbReference>
<dbReference type="Gene3D" id="3.30.559.10">
    <property type="entry name" value="Chloramphenicol acetyltransferase-like domain"/>
    <property type="match status" value="2"/>
</dbReference>
<dbReference type="InterPro" id="IPR023213">
    <property type="entry name" value="CAT-like_dom_sf"/>
</dbReference>
<dbReference type="InterPro" id="IPR050317">
    <property type="entry name" value="Plant_Fungal_Acyltransferase"/>
</dbReference>
<dbReference type="PANTHER" id="PTHR31642:SF11">
    <property type="entry name" value="SHIKIMATE O-HYDROXYCINNAMOYLTRANSFERASE"/>
    <property type="match status" value="1"/>
</dbReference>
<dbReference type="PANTHER" id="PTHR31642">
    <property type="entry name" value="TRICHOTHECENE 3-O-ACETYLTRANSFERASE"/>
    <property type="match status" value="1"/>
</dbReference>
<dbReference type="Pfam" id="PF02458">
    <property type="entry name" value="Transferase"/>
    <property type="match status" value="1"/>
</dbReference>
<comment type="function">
    <text evidence="3">Involved in the biosynthesis of rosmarinic acid, a compound with antiviral, antimicrobial and anti-inflammatory activities. Can use 4-coumaroyl- and caffeoyl-CoA as hydroxycinnamoyl donors and 4-Hydroxyphenyllactate and 3.4-Dihydroxyphenyllactate, but not shikimate or quinate, as hydroxycinnamoyl acceptors. Can also putatively catalyze amide formation with D-amino acids as acceptors.</text>
</comment>
<comment type="catalytic activity">
    <reaction evidence="3 4">
        <text>(2R)-3-(3,4-dihydroxyphenyl)lactate + (E)-caffeoyl-CoA = (R)-rosmarinate + CoA</text>
        <dbReference type="Rhea" id="RHEA:22344"/>
        <dbReference type="ChEBI" id="CHEBI:57287"/>
        <dbReference type="ChEBI" id="CHEBI:71492"/>
        <dbReference type="ChEBI" id="CHEBI:71493"/>
        <dbReference type="ChEBI" id="CHEBI:87136"/>
        <dbReference type="EC" id="2.3.1.140"/>
    </reaction>
</comment>
<comment type="biophysicochemical properties">
    <kinetics>
        <KM evidence="4">4.7 uM for 4-coumaroyl-CoA (in the presence of 4-Hydroxyphenyllactate)</KM>
        <KM evidence="4">3.4 uM for caffeoyl-CoA (in the presence of 4-Hydroxyphenyllactate)</KM>
        <KM evidence="4">1.3 uM for 4-coumaroyl-CoA (in the presence of 3.4-Dihydroxyphenyllactate)</KM>
        <KM evidence="4">4 uM for caffeoyl-CoA (in the presence of 3.4-Dihydroxyphenyllactate)</KM>
        <KM evidence="4">39 uM for 4-Hydroxyphenyllactate (in the presence of 4-coumaroyl-CoA)</KM>
        <KM evidence="4">219 uM for 4-Hydroxyphenyllactate (in the presence of caffeoyl-CoA)</KM>
        <KM evidence="4">56 uM for 3.4-Dihydroxyphenyllactate (in the presence of 4-coumaroyl-CoA)</KM>
        <KM evidence="4">132 uM for 3.4-Dihydroxyphenyllactate (in the presence of caffeoyl-CoA)</KM>
    </kinetics>
    <phDependence>
        <text evidence="4">Optimum pH is 7.8.</text>
    </phDependence>
</comment>
<comment type="similarity">
    <text evidence="5">Belongs to the plant acyltransferase family.</text>
</comment>
<name>RAS_PLESU</name>
<keyword id="KW-0002">3D-structure</keyword>
<keyword id="KW-0012">Acyltransferase</keyword>
<keyword id="KW-0903">Direct protein sequencing</keyword>
<keyword id="KW-0808">Transferase</keyword>
<accession>A0PDV5</accession>
<evidence type="ECO:0000255" key="1"/>
<evidence type="ECO:0000256" key="2">
    <source>
        <dbReference type="SAM" id="MobiDB-lite"/>
    </source>
</evidence>
<evidence type="ECO:0000269" key="3">
    <source>
    </source>
</evidence>
<evidence type="ECO:0000269" key="4">
    <source>
    </source>
</evidence>
<evidence type="ECO:0000305" key="5"/>
<evidence type="ECO:0007829" key="6">
    <source>
        <dbReference type="PDB" id="6MK2"/>
    </source>
</evidence>
<sequence length="430" mass="47902">MKIEVKDSTMIKPSAETPGGSLWLSNLDLLSPANYHTLSVHFYSHDGSDNFFDAAGLKESLSRALVEFYPYAGRLKLNGNRLEIDCNNEGLLLVEAECDGALDELGDFAPRPELNLIPKVDYSRGISTYPLMVFQLTRFKCGGVALGVANEHHLSDGVAALHFINTWAHLSRGAPAPTPLPHFDRSSLSARNPPQPQFSHAEYQPPPTLENPLPHTDIAHSRFKLTRDQLNSLKSKFKTAPADGGAGKSYSTFEVLAGHIWRSVCIARGLPEGQETKLHIPFDGRGRLQLPPGFFGNAIFFATPIATCGEIESNSLNYAVRRVSDGVSRLDEDYLRSSIDFLELQEDISKLAQGAHSFRCPNLWVISWVWLPIYEPDFGWGKAVYMGPWAAPFEGKSYLLPNPEKDGSLFVSITLHKQHMERFEKLFYEI</sequence>
<reference key="1">
    <citation type="journal article" date="2006" name="Planta">
        <title>Rosmarinic acid synthase is a new member of the superfamily of BAHD acyltransferases.</title>
        <authorList>
            <person name="Berger A."/>
            <person name="Meinhard J."/>
            <person name="Petersen M."/>
        </authorList>
    </citation>
    <scope>NUCLEOTIDE SEQUENCE [MRNA]</scope>
    <scope>PROTEIN SEQUENCE OF 64-74; 175-180; 225-234; 330-336; 340-350; 397-401 AND 418-425</scope>
    <scope>FUNCTION</scope>
    <scope>CATALYTIC ACTIVITY</scope>
</reference>
<reference key="2">
    <citation type="journal article" date="2011" name="Planta">
        <title>Distinct substrate specificities and unusual substrate flexibilities of two hydroxycinnamoyltransferases, rosmarinic acid synthase and hydroxycinnamoyl-CoA:shikimate hydroxycinnamoyl-transferase, from Coleus blumei Benth.</title>
        <authorList>
            <person name="Sander M."/>
            <person name="Petersen M."/>
        </authorList>
    </citation>
    <scope>CATALYTIC ACTIVITY</scope>
    <scope>BIOPHYSICOCHEMICAL PROPERTIES</scope>
    <scope>SUBSTRATE SPECIFICITY</scope>
</reference>
<protein>
    <recommendedName>
        <fullName>Rosmarinate synthase</fullName>
        <shortName>CbRAS</shortName>
        <ecNumber>2.3.1.140</ecNumber>
    </recommendedName>
    <alternativeName>
        <fullName>Hydroxycinnamoyl transferase</fullName>
        <shortName>CbHCT1</shortName>
    </alternativeName>
</protein>